<evidence type="ECO:0000255" key="1">
    <source>
        <dbReference type="HAMAP-Rule" id="MF_00385"/>
    </source>
</evidence>
<evidence type="ECO:0000256" key="2">
    <source>
        <dbReference type="SAM" id="MobiDB-lite"/>
    </source>
</evidence>
<evidence type="ECO:0000305" key="3"/>
<sequence>MALKIRLARGGAKKRPFYRVVIADTRSPRDGRFIEKIGTFNPLLPKDNAERIKVDIERAKHWLSVGALPTDRVARFLDDAGVYTRKARSNPEKSKPKAKAQERLEAARMAEEEAAAAAKAAAEAPAEEAPAAEAPAEEAQA</sequence>
<comment type="similarity">
    <text evidence="1">Belongs to the bacterial ribosomal protein bS16 family.</text>
</comment>
<feature type="chain" id="PRO_1000072197" description="Small ribosomal subunit protein bS16">
    <location>
        <begin position="1"/>
        <end position="141"/>
    </location>
</feature>
<feature type="region of interest" description="Disordered" evidence="2">
    <location>
        <begin position="84"/>
        <end position="141"/>
    </location>
</feature>
<feature type="compositionally biased region" description="Basic and acidic residues" evidence="2">
    <location>
        <begin position="89"/>
        <end position="111"/>
    </location>
</feature>
<feature type="compositionally biased region" description="Low complexity" evidence="2">
    <location>
        <begin position="115"/>
        <end position="141"/>
    </location>
</feature>
<keyword id="KW-1185">Reference proteome</keyword>
<keyword id="KW-0687">Ribonucleoprotein</keyword>
<keyword id="KW-0689">Ribosomal protein</keyword>
<organism>
    <name type="scientific">Parvibaculum lavamentivorans (strain DS-1 / DSM 13023 / NCIMB 13966)</name>
    <dbReference type="NCBI Taxonomy" id="402881"/>
    <lineage>
        <taxon>Bacteria</taxon>
        <taxon>Pseudomonadati</taxon>
        <taxon>Pseudomonadota</taxon>
        <taxon>Alphaproteobacteria</taxon>
        <taxon>Hyphomicrobiales</taxon>
        <taxon>Parvibaculaceae</taxon>
        <taxon>Parvibaculum</taxon>
    </lineage>
</organism>
<protein>
    <recommendedName>
        <fullName evidence="1">Small ribosomal subunit protein bS16</fullName>
    </recommendedName>
    <alternativeName>
        <fullName evidence="3">30S ribosomal protein S16</fullName>
    </alternativeName>
</protein>
<dbReference type="EMBL" id="CP000774">
    <property type="protein sequence ID" value="ABS63039.1"/>
    <property type="molecule type" value="Genomic_DNA"/>
</dbReference>
<dbReference type="RefSeq" id="WP_012110316.1">
    <property type="nucleotide sequence ID" value="NC_009719.1"/>
</dbReference>
<dbReference type="SMR" id="A7HT06"/>
<dbReference type="STRING" id="402881.Plav_1419"/>
<dbReference type="KEGG" id="pla:Plav_1419"/>
<dbReference type="eggNOG" id="COG0228">
    <property type="taxonomic scope" value="Bacteria"/>
</dbReference>
<dbReference type="HOGENOM" id="CLU_100590_3_1_5"/>
<dbReference type="OrthoDB" id="9807878at2"/>
<dbReference type="Proteomes" id="UP000006377">
    <property type="component" value="Chromosome"/>
</dbReference>
<dbReference type="GO" id="GO:0005737">
    <property type="term" value="C:cytoplasm"/>
    <property type="evidence" value="ECO:0007669"/>
    <property type="project" value="UniProtKB-ARBA"/>
</dbReference>
<dbReference type="GO" id="GO:0015935">
    <property type="term" value="C:small ribosomal subunit"/>
    <property type="evidence" value="ECO:0007669"/>
    <property type="project" value="TreeGrafter"/>
</dbReference>
<dbReference type="GO" id="GO:0003735">
    <property type="term" value="F:structural constituent of ribosome"/>
    <property type="evidence" value="ECO:0007669"/>
    <property type="project" value="InterPro"/>
</dbReference>
<dbReference type="GO" id="GO:0006412">
    <property type="term" value="P:translation"/>
    <property type="evidence" value="ECO:0007669"/>
    <property type="project" value="UniProtKB-UniRule"/>
</dbReference>
<dbReference type="Gene3D" id="3.30.1320.10">
    <property type="match status" value="1"/>
</dbReference>
<dbReference type="HAMAP" id="MF_00385">
    <property type="entry name" value="Ribosomal_bS16"/>
    <property type="match status" value="1"/>
</dbReference>
<dbReference type="InterPro" id="IPR000307">
    <property type="entry name" value="Ribosomal_bS16"/>
</dbReference>
<dbReference type="InterPro" id="IPR020592">
    <property type="entry name" value="Ribosomal_bS16_CS"/>
</dbReference>
<dbReference type="InterPro" id="IPR023803">
    <property type="entry name" value="Ribosomal_bS16_dom_sf"/>
</dbReference>
<dbReference type="NCBIfam" id="TIGR00002">
    <property type="entry name" value="S16"/>
    <property type="match status" value="1"/>
</dbReference>
<dbReference type="PANTHER" id="PTHR12919">
    <property type="entry name" value="30S RIBOSOMAL PROTEIN S16"/>
    <property type="match status" value="1"/>
</dbReference>
<dbReference type="PANTHER" id="PTHR12919:SF20">
    <property type="entry name" value="SMALL RIBOSOMAL SUBUNIT PROTEIN BS16M"/>
    <property type="match status" value="1"/>
</dbReference>
<dbReference type="Pfam" id="PF00886">
    <property type="entry name" value="Ribosomal_S16"/>
    <property type="match status" value="1"/>
</dbReference>
<dbReference type="SUPFAM" id="SSF54565">
    <property type="entry name" value="Ribosomal protein S16"/>
    <property type="match status" value="1"/>
</dbReference>
<dbReference type="PROSITE" id="PS00732">
    <property type="entry name" value="RIBOSOMAL_S16"/>
    <property type="match status" value="1"/>
</dbReference>
<proteinExistence type="inferred from homology"/>
<name>RS16_PARL1</name>
<gene>
    <name evidence="1" type="primary">rpsP</name>
    <name type="ordered locus">Plav_1419</name>
</gene>
<accession>A7HT06</accession>
<reference key="1">
    <citation type="journal article" date="2011" name="Stand. Genomic Sci.">
        <title>Complete genome sequence of Parvibaculum lavamentivorans type strain (DS-1(T)).</title>
        <authorList>
            <person name="Schleheck D."/>
            <person name="Weiss M."/>
            <person name="Pitluck S."/>
            <person name="Bruce D."/>
            <person name="Land M.L."/>
            <person name="Han S."/>
            <person name="Saunders E."/>
            <person name="Tapia R."/>
            <person name="Detter C."/>
            <person name="Brettin T."/>
            <person name="Han J."/>
            <person name="Woyke T."/>
            <person name="Goodwin L."/>
            <person name="Pennacchio L."/>
            <person name="Nolan M."/>
            <person name="Cook A.M."/>
            <person name="Kjelleberg S."/>
            <person name="Thomas T."/>
        </authorList>
    </citation>
    <scope>NUCLEOTIDE SEQUENCE [LARGE SCALE GENOMIC DNA]</scope>
    <source>
        <strain>DS-1 / DSM 13023 / NCIMB 13966</strain>
    </source>
</reference>